<protein>
    <recommendedName>
        <fullName>Fork-head transcriptional regulator 2</fullName>
    </recommendedName>
</protein>
<gene>
    <name type="primary">FKH2</name>
    <name type="synonym">FKH1</name>
    <name type="ordered locus">CAALFM_C300670CA</name>
    <name type="ORF">CaO19.12844</name>
    <name type="ORF">CaO19.5389</name>
</gene>
<proteinExistence type="evidence at transcript level"/>
<keyword id="KW-0238">DNA-binding</keyword>
<keyword id="KW-0539">Nucleus</keyword>
<keyword id="KW-1185">Reference proteome</keyword>
<keyword id="KW-0804">Transcription</keyword>
<keyword id="KW-0805">Transcription regulation</keyword>
<keyword id="KW-0843">Virulence</keyword>
<reference key="1">
    <citation type="journal article" date="2004" name="Proc. Natl. Acad. Sci. U.S.A.">
        <title>The diploid genome sequence of Candida albicans.</title>
        <authorList>
            <person name="Jones T."/>
            <person name="Federspiel N.A."/>
            <person name="Chibana H."/>
            <person name="Dungan J."/>
            <person name="Kalman S."/>
            <person name="Magee B.B."/>
            <person name="Newport G."/>
            <person name="Thorstenson Y.R."/>
            <person name="Agabian N."/>
            <person name="Magee P.T."/>
            <person name="Davis R.W."/>
            <person name="Scherer S."/>
        </authorList>
    </citation>
    <scope>NUCLEOTIDE SEQUENCE [LARGE SCALE GENOMIC DNA]</scope>
    <source>
        <strain>SC5314 / ATCC MYA-2876</strain>
    </source>
</reference>
<reference key="2">
    <citation type="journal article" date="2007" name="Genome Biol.">
        <title>Assembly of the Candida albicans genome into sixteen supercontigs aligned on the eight chromosomes.</title>
        <authorList>
            <person name="van het Hoog M."/>
            <person name="Rast T.J."/>
            <person name="Martchenko M."/>
            <person name="Grindle S."/>
            <person name="Dignard D."/>
            <person name="Hogues H."/>
            <person name="Cuomo C."/>
            <person name="Berriman M."/>
            <person name="Scherer S."/>
            <person name="Magee B.B."/>
            <person name="Whiteway M."/>
            <person name="Chibana H."/>
            <person name="Nantel A."/>
            <person name="Magee P.T."/>
        </authorList>
    </citation>
    <scope>GENOME REANNOTATION</scope>
    <source>
        <strain>SC5314 / ATCC MYA-2876</strain>
    </source>
</reference>
<reference key="3">
    <citation type="journal article" date="2013" name="Genome Biol.">
        <title>Assembly of a phased diploid Candida albicans genome facilitates allele-specific measurements and provides a simple model for repeat and indel structure.</title>
        <authorList>
            <person name="Muzzey D."/>
            <person name="Schwartz K."/>
            <person name="Weissman J.S."/>
            <person name="Sherlock G."/>
        </authorList>
    </citation>
    <scope>NUCLEOTIDE SEQUENCE [LARGE SCALE GENOMIC DNA]</scope>
    <scope>GENOME REANNOTATION</scope>
    <source>
        <strain>SC5314 / ATCC MYA-2876</strain>
    </source>
</reference>
<reference key="4">
    <citation type="journal article" date="2002" name="Eukaryot. Cell">
        <title>A forkhead transcription factor is important for true hyphal as well as yeast morphogenesis in Candida albicans.</title>
        <authorList>
            <person name="Bensen E.S."/>
            <person name="Filler S.G."/>
            <person name="Berman J."/>
        </authorList>
    </citation>
    <scope>FUNCTION</scope>
    <scope>DISRUPTION PHENOTYPE</scope>
</reference>
<reference key="5">
    <citation type="journal article" date="2006" name="Yeast">
        <title>Repression of CDC28 reduces the expression of the morphology-related transcription factors, Efg1p, Nrg1p, Rbf1p, Rim101p, Fkh2p and Tec1p and induces cell elongation in Candida albicans.</title>
        <authorList>
            <person name="Umeyama T."/>
            <person name="Kaneko A."/>
            <person name="Niimi M."/>
            <person name="Uehara Y."/>
        </authorList>
    </citation>
    <scope>INDUCTION</scope>
</reference>
<reference key="6">
    <citation type="journal article" date="2007" name="Cell. Microbiol.">
        <title>In vivo transcript profiling of Candida albicans identifies a gene essential for interepithelial dissemination.</title>
        <authorList>
            <person name="Zakikhany K."/>
            <person name="Naglik J.R."/>
            <person name="Schmidt-Westhausen A."/>
            <person name="Holland G."/>
            <person name="Schaller M."/>
            <person name="Hube B."/>
        </authorList>
    </citation>
    <scope>INDUCTION</scope>
</reference>
<feature type="chain" id="PRO_0000426080" description="Fork-head transcriptional regulator 2">
    <location>
        <begin position="1"/>
        <end position="687"/>
    </location>
</feature>
<feature type="domain" description="FHA" evidence="1">
    <location>
        <begin position="82"/>
        <end position="146"/>
    </location>
</feature>
<feature type="DNA-binding region" description="Fork-head" evidence="2">
    <location>
        <begin position="252"/>
        <end position="350"/>
    </location>
</feature>
<feature type="region of interest" description="Disordered" evidence="4">
    <location>
        <begin position="1"/>
        <end position="23"/>
    </location>
</feature>
<feature type="region of interest" description="Disordered" evidence="4">
    <location>
        <begin position="226"/>
        <end position="246"/>
    </location>
</feature>
<feature type="region of interest" description="Disordered" evidence="4">
    <location>
        <begin position="385"/>
        <end position="449"/>
    </location>
</feature>
<feature type="region of interest" description="Disordered" evidence="4">
    <location>
        <begin position="472"/>
        <end position="569"/>
    </location>
</feature>
<feature type="region of interest" description="Disordered" evidence="4">
    <location>
        <begin position="584"/>
        <end position="687"/>
    </location>
</feature>
<feature type="short sequence motif" description="Nuclear localization signal" evidence="3">
    <location>
        <begin position="663"/>
        <end position="670"/>
    </location>
</feature>
<feature type="compositionally biased region" description="Polar residues" evidence="4">
    <location>
        <begin position="226"/>
        <end position="241"/>
    </location>
</feature>
<feature type="compositionally biased region" description="Low complexity" evidence="4">
    <location>
        <begin position="389"/>
        <end position="410"/>
    </location>
</feature>
<feature type="compositionally biased region" description="Polar residues" evidence="4">
    <location>
        <begin position="411"/>
        <end position="442"/>
    </location>
</feature>
<feature type="compositionally biased region" description="Low complexity" evidence="4">
    <location>
        <begin position="472"/>
        <end position="490"/>
    </location>
</feature>
<feature type="compositionally biased region" description="Polar residues" evidence="4">
    <location>
        <begin position="491"/>
        <end position="540"/>
    </location>
</feature>
<feature type="compositionally biased region" description="Low complexity" evidence="4">
    <location>
        <begin position="542"/>
        <end position="563"/>
    </location>
</feature>
<feature type="compositionally biased region" description="Low complexity" evidence="4">
    <location>
        <begin position="589"/>
        <end position="624"/>
    </location>
</feature>
<feature type="compositionally biased region" description="Polar residues" evidence="4">
    <location>
        <begin position="625"/>
        <end position="659"/>
    </location>
</feature>
<dbReference type="EMBL" id="CP017625">
    <property type="protein sequence ID" value="AOW28117.1"/>
    <property type="molecule type" value="Genomic_DNA"/>
</dbReference>
<dbReference type="RefSeq" id="XP_019330824.1">
    <property type="nucleotide sequence ID" value="XM_019475279.1"/>
</dbReference>
<dbReference type="SMR" id="Q5A7S7"/>
<dbReference type="BioGRID" id="1223630">
    <property type="interactions" value="4"/>
</dbReference>
<dbReference type="FunCoup" id="Q5A7S7">
    <property type="interactions" value="2000"/>
</dbReference>
<dbReference type="STRING" id="237561.Q5A7S7"/>
<dbReference type="EnsemblFungi" id="C3_00670C_A-T">
    <property type="protein sequence ID" value="C3_00670C_A-T-p1"/>
    <property type="gene ID" value="C3_00670C_A"/>
</dbReference>
<dbReference type="GeneID" id="3640536"/>
<dbReference type="KEGG" id="cal:CAALFM_C300670CA"/>
<dbReference type="CGD" id="CAL0000195461">
    <property type="gene designation" value="FKH2"/>
</dbReference>
<dbReference type="VEuPathDB" id="FungiDB:C3_00670C_A"/>
<dbReference type="eggNOG" id="KOG2294">
    <property type="taxonomic scope" value="Eukaryota"/>
</dbReference>
<dbReference type="HOGENOM" id="CLU_007090_2_0_1"/>
<dbReference type="InParanoid" id="Q5A7S7"/>
<dbReference type="OrthoDB" id="5954824at2759"/>
<dbReference type="PHI-base" id="PHI:252"/>
<dbReference type="PRO" id="PR:Q5A7S7"/>
<dbReference type="Proteomes" id="UP000000559">
    <property type="component" value="Chromosome 3"/>
</dbReference>
<dbReference type="GO" id="GO:0005634">
    <property type="term" value="C:nucleus"/>
    <property type="evidence" value="ECO:0000314"/>
    <property type="project" value="CGD"/>
</dbReference>
<dbReference type="GO" id="GO:0003677">
    <property type="term" value="F:DNA binding"/>
    <property type="evidence" value="ECO:0000314"/>
    <property type="project" value="CGD"/>
</dbReference>
<dbReference type="GO" id="GO:0003700">
    <property type="term" value="F:DNA-binding transcription factor activity"/>
    <property type="evidence" value="ECO:0000315"/>
    <property type="project" value="CGD"/>
</dbReference>
<dbReference type="GO" id="GO:0000981">
    <property type="term" value="F:DNA-binding transcription factor activity, RNA polymerase II-specific"/>
    <property type="evidence" value="ECO:0000318"/>
    <property type="project" value="GO_Central"/>
</dbReference>
<dbReference type="GO" id="GO:0000978">
    <property type="term" value="F:RNA polymerase II cis-regulatory region sequence-specific DNA binding"/>
    <property type="evidence" value="ECO:0000318"/>
    <property type="project" value="GO_Central"/>
</dbReference>
<dbReference type="GO" id="GO:0000902">
    <property type="term" value="P:cell morphogenesis"/>
    <property type="evidence" value="ECO:0000315"/>
    <property type="project" value="CGD"/>
</dbReference>
<dbReference type="GO" id="GO:0006974">
    <property type="term" value="P:DNA damage response"/>
    <property type="evidence" value="ECO:0000314"/>
    <property type="project" value="CGD"/>
</dbReference>
<dbReference type="GO" id="GO:0030447">
    <property type="term" value="P:filamentous growth"/>
    <property type="evidence" value="ECO:0000315"/>
    <property type="project" value="CGD"/>
</dbReference>
<dbReference type="GO" id="GO:0044182">
    <property type="term" value="P:filamentous growth of a population of unicellular organisms"/>
    <property type="evidence" value="ECO:0000315"/>
    <property type="project" value="CGD"/>
</dbReference>
<dbReference type="GO" id="GO:2000221">
    <property type="term" value="P:negative regulation of pseudohyphal growth"/>
    <property type="evidence" value="ECO:0000315"/>
    <property type="project" value="CGD"/>
</dbReference>
<dbReference type="GO" id="GO:0006357">
    <property type="term" value="P:regulation of transcription by RNA polymerase II"/>
    <property type="evidence" value="ECO:0000315"/>
    <property type="project" value="CGD"/>
</dbReference>
<dbReference type="CDD" id="cd00059">
    <property type="entry name" value="FH_FOX"/>
    <property type="match status" value="1"/>
</dbReference>
<dbReference type="CDD" id="cd22701">
    <property type="entry name" value="FHA_FKH1-like"/>
    <property type="match status" value="1"/>
</dbReference>
<dbReference type="FunFam" id="2.60.200.20:FF:000147">
    <property type="entry name" value="Fork-head transcriptional regulator 2"/>
    <property type="match status" value="1"/>
</dbReference>
<dbReference type="FunFam" id="1.10.10.10:FF:000030">
    <property type="entry name" value="Forkhead box protein K2"/>
    <property type="match status" value="1"/>
</dbReference>
<dbReference type="Gene3D" id="2.60.200.20">
    <property type="match status" value="1"/>
</dbReference>
<dbReference type="Gene3D" id="1.10.10.10">
    <property type="entry name" value="Winged helix-like DNA-binding domain superfamily/Winged helix DNA-binding domain"/>
    <property type="match status" value="1"/>
</dbReference>
<dbReference type="InterPro" id="IPR000253">
    <property type="entry name" value="FHA_dom"/>
</dbReference>
<dbReference type="InterPro" id="IPR001766">
    <property type="entry name" value="Fork_head_dom"/>
</dbReference>
<dbReference type="InterPro" id="IPR008984">
    <property type="entry name" value="SMAD_FHA_dom_sf"/>
</dbReference>
<dbReference type="InterPro" id="IPR018122">
    <property type="entry name" value="TF_fork_head_CS_1"/>
</dbReference>
<dbReference type="InterPro" id="IPR030456">
    <property type="entry name" value="TF_fork_head_CS_2"/>
</dbReference>
<dbReference type="InterPro" id="IPR036388">
    <property type="entry name" value="WH-like_DNA-bd_sf"/>
</dbReference>
<dbReference type="InterPro" id="IPR036390">
    <property type="entry name" value="WH_DNA-bd_sf"/>
</dbReference>
<dbReference type="PANTHER" id="PTHR45881">
    <property type="entry name" value="CHECKPOINT SUPPRESSOR 1-LIKE, ISOFORM A-RELATED"/>
    <property type="match status" value="1"/>
</dbReference>
<dbReference type="PANTHER" id="PTHR45881:SF1">
    <property type="entry name" value="FORK HEAD PROTEIN HOMOLOG 2"/>
    <property type="match status" value="1"/>
</dbReference>
<dbReference type="Pfam" id="PF00498">
    <property type="entry name" value="FHA"/>
    <property type="match status" value="1"/>
</dbReference>
<dbReference type="Pfam" id="PF00250">
    <property type="entry name" value="Forkhead"/>
    <property type="match status" value="1"/>
</dbReference>
<dbReference type="PRINTS" id="PR00053">
    <property type="entry name" value="FORKHEAD"/>
</dbReference>
<dbReference type="SMART" id="SM00339">
    <property type="entry name" value="FH"/>
    <property type="match status" value="1"/>
</dbReference>
<dbReference type="SMART" id="SM00240">
    <property type="entry name" value="FHA"/>
    <property type="match status" value="1"/>
</dbReference>
<dbReference type="SUPFAM" id="SSF49879">
    <property type="entry name" value="SMAD/FHA domain"/>
    <property type="match status" value="1"/>
</dbReference>
<dbReference type="SUPFAM" id="SSF46785">
    <property type="entry name" value="Winged helix' DNA-binding domain"/>
    <property type="match status" value="1"/>
</dbReference>
<dbReference type="PROSITE" id="PS50006">
    <property type="entry name" value="FHA_DOMAIN"/>
    <property type="match status" value="1"/>
</dbReference>
<dbReference type="PROSITE" id="PS00657">
    <property type="entry name" value="FORK_HEAD_1"/>
    <property type="match status" value="1"/>
</dbReference>
<dbReference type="PROSITE" id="PS00658">
    <property type="entry name" value="FORK_HEAD_2"/>
    <property type="match status" value="1"/>
</dbReference>
<dbReference type="PROSITE" id="PS50039">
    <property type="entry name" value="FORK_HEAD_3"/>
    <property type="match status" value="1"/>
</dbReference>
<evidence type="ECO:0000255" key="1">
    <source>
        <dbReference type="PROSITE-ProRule" id="PRU00086"/>
    </source>
</evidence>
<evidence type="ECO:0000255" key="2">
    <source>
        <dbReference type="PROSITE-ProRule" id="PRU00089"/>
    </source>
</evidence>
<evidence type="ECO:0000255" key="3">
    <source>
        <dbReference type="PROSITE-ProRule" id="PRU00768"/>
    </source>
</evidence>
<evidence type="ECO:0000256" key="4">
    <source>
        <dbReference type="SAM" id="MobiDB-lite"/>
    </source>
</evidence>
<evidence type="ECO:0000269" key="5">
    <source>
    </source>
</evidence>
<evidence type="ECO:0000269" key="6">
    <source>
    </source>
</evidence>
<evidence type="ECO:0000269" key="7">
    <source>
    </source>
</evidence>
<evidence type="ECO:0000305" key="8"/>
<accession>Q5A7S7</accession>
<accession>A0A1D8PJ14</accession>
<name>FKH2_CANAL</name>
<organism>
    <name type="scientific">Candida albicans (strain SC5314 / ATCC MYA-2876)</name>
    <name type="common">Yeast</name>
    <dbReference type="NCBI Taxonomy" id="237561"/>
    <lineage>
        <taxon>Eukaryota</taxon>
        <taxon>Fungi</taxon>
        <taxon>Dikarya</taxon>
        <taxon>Ascomycota</taxon>
        <taxon>Saccharomycotina</taxon>
        <taxon>Pichiomycetes</taxon>
        <taxon>Debaryomycetaceae</taxon>
        <taxon>Candida/Lodderomyces clade</taxon>
        <taxon>Candida</taxon>
    </lineage>
</organism>
<comment type="function">
    <text evidence="5">Transcription factor required for the morphogenesis of true hyphal as well as yeast cells. Contributes to virulence.</text>
</comment>
<comment type="subcellular location">
    <subcellularLocation>
        <location evidence="8">Nucleus</location>
    </subcellularLocation>
</comment>
<comment type="induction">
    <text evidence="6 7">Induced during host epithelium infection. Expression is positively regulated by CDC28.</text>
</comment>
<comment type="disruption phenotype">
    <text evidence="5">Forms constitutive pseudohyphae. Impairs ability to damage human epithelial or human endothelial cells in vitro.</text>
</comment>
<sequence length="687" mass="76331">MSAQFITPKKRPHSPLDSNELLPSFEDPQDMINAVVSTLSAPEEKTNVSIAYANEKNQATEIQAYAKIAGKDWTFYVKSLAVSIGRNIELSAPSNTNITTPLIDIDLGPAKVVSRSHAAITYNLDLRCWELKVLGRNGARIDGQKVNVDSPNVNALHSGAILDIGGTQMMFILPDAPAVVAPKMLEKCLLRYKEQQQQQNKRISSGPGIGGSTSFQMFDKAHLTHSPSSISANSLQSNLDQDLSKEEAKDIKPPYSYATMITQAILSNPQGVMSLSEIYNWIADHYAYYKYSKTGWQNSIRHNLSLNKAFEKVPRRPNEPGKGMKWQISESYKEEFLNKISDGTISKTRRGSSVSRQLSLHLATHNQLPESHKYTMDQQIHNGTAASIPQQQKQQQQQQKRPPQQQNSQPHLSQPHYTIPSNPMQTNSMGYIPQSNIYNMSNSDRRYTPYQQSQNPLMYQHQQQHIGQTYNQLGRPQGQLGQPMMQPQQQSYTSSNIKTEPSSPKRNPSISNNTPKMAKGTVSTESHSRSTSYTTTQLHEMSNFNSSANDSTSTAPTASTTTNGDIGLNFASPKKITALEAYTPERGSKGNPSGTNNNNNTNNTNTNTTNNNNGKNTAGGPNTNQSSPAFWNFVQFSTPNGQSPVRKSSEEVGNNSPTLNRKIKRERENDETNSPFKKKQRTEMIDS</sequence>